<protein>
    <recommendedName>
        <fullName>Lysosomal alpha-glucosidase</fullName>
        <ecNumber evidence="2">3.2.1.20</ecNumber>
    </recommendedName>
    <alternativeName>
        <fullName>Acid maltase</fullName>
    </alternativeName>
</protein>
<name>LYAG_RAT</name>
<gene>
    <name type="primary">Gaa</name>
</gene>
<feature type="signal peptide" evidence="3">
    <location>
        <begin position="1"/>
        <end position="27"/>
    </location>
</feature>
<feature type="propeptide" id="PRO_0000260442" evidence="1">
    <location>
        <begin position="28"/>
        <end position="69"/>
    </location>
</feature>
<feature type="chain" id="PRO_0000260443" description="Lysosomal alpha-glucosidase">
    <location>
        <begin position="70"/>
        <end position="953"/>
    </location>
</feature>
<feature type="domain" description="P-type" evidence="4">
    <location>
        <begin position="80"/>
        <end position="131"/>
    </location>
</feature>
<feature type="active site" description="Nucleophile" evidence="5">
    <location>
        <position position="518"/>
    </location>
</feature>
<feature type="active site" evidence="1">
    <location>
        <position position="521"/>
    </location>
</feature>
<feature type="binding site" evidence="2">
    <location>
        <position position="404"/>
    </location>
    <ligand>
        <name>substrate</name>
    </ligand>
</feature>
<feature type="binding site" evidence="2">
    <location>
        <position position="600"/>
    </location>
    <ligand>
        <name>substrate</name>
    </ligand>
</feature>
<feature type="binding site" evidence="2">
    <location>
        <position position="616"/>
    </location>
    <ligand>
        <name>substrate</name>
    </ligand>
</feature>
<feature type="binding site" evidence="2">
    <location>
        <position position="674"/>
    </location>
    <ligand>
        <name>substrate</name>
    </ligand>
</feature>
<feature type="glycosylation site" description="N-linked (GlcNAc...) asparagine" evidence="3">
    <location>
        <position position="140"/>
    </location>
</feature>
<feature type="glycosylation site" description="N-linked (GlcNAc...) asparagine" evidence="3">
    <location>
        <position position="233"/>
    </location>
</feature>
<feature type="glycosylation site" description="N-linked (GlcNAc...) asparagine" evidence="3">
    <location>
        <position position="390"/>
    </location>
</feature>
<feature type="glycosylation site" description="N-linked (GlcNAc...) asparagine" evidence="3">
    <location>
        <position position="470"/>
    </location>
</feature>
<feature type="glycosylation site" description="N-linked (GlcNAc...) asparagine" evidence="3">
    <location>
        <position position="652"/>
    </location>
</feature>
<feature type="glycosylation site" description="N-linked (GlcNAc...) asparagine" evidence="3">
    <location>
        <position position="883"/>
    </location>
</feature>
<feature type="glycosylation site" description="N-linked (GlcNAc...) asparagine" evidence="3">
    <location>
        <position position="926"/>
    </location>
</feature>
<feature type="disulfide bond" evidence="4">
    <location>
        <begin position="82"/>
        <end position="109"/>
    </location>
</feature>
<feature type="disulfide bond" evidence="4">
    <location>
        <begin position="92"/>
        <end position="108"/>
    </location>
</feature>
<feature type="disulfide bond" evidence="4">
    <location>
        <begin position="103"/>
        <end position="127"/>
    </location>
</feature>
<feature type="disulfide bond" evidence="2">
    <location>
        <begin position="533"/>
        <end position="558"/>
    </location>
</feature>
<feature type="disulfide bond" evidence="2">
    <location>
        <begin position="647"/>
        <end position="658"/>
    </location>
</feature>
<keyword id="KW-1015">Disulfide bond</keyword>
<keyword id="KW-0325">Glycoprotein</keyword>
<keyword id="KW-0326">Glycosidase</keyword>
<keyword id="KW-0378">Hydrolase</keyword>
<keyword id="KW-0458">Lysosome</keyword>
<keyword id="KW-0472">Membrane</keyword>
<keyword id="KW-1185">Reference proteome</keyword>
<keyword id="KW-0732">Signal</keyword>
<proteinExistence type="evidence at transcript level"/>
<accession>Q6P7A9</accession>
<evidence type="ECO:0000250" key="1"/>
<evidence type="ECO:0000250" key="2">
    <source>
        <dbReference type="UniProtKB" id="P10253"/>
    </source>
</evidence>
<evidence type="ECO:0000255" key="3"/>
<evidence type="ECO:0000255" key="4">
    <source>
        <dbReference type="PROSITE-ProRule" id="PRU00779"/>
    </source>
</evidence>
<evidence type="ECO:0000255" key="5">
    <source>
        <dbReference type="PROSITE-ProRule" id="PRU10066"/>
    </source>
</evidence>
<evidence type="ECO:0000305" key="6"/>
<dbReference type="EC" id="3.2.1.20" evidence="2"/>
<dbReference type="EMBL" id="BC061753">
    <property type="protein sequence ID" value="AAH61753.1"/>
    <property type="molecule type" value="mRNA"/>
</dbReference>
<dbReference type="RefSeq" id="NP_954549.1">
    <property type="nucleotide sequence ID" value="NM_199118.1"/>
</dbReference>
<dbReference type="SMR" id="Q6P7A9"/>
<dbReference type="BioGRID" id="266559">
    <property type="interactions" value="1"/>
</dbReference>
<dbReference type="FunCoup" id="Q6P7A9">
    <property type="interactions" value="823"/>
</dbReference>
<dbReference type="IntAct" id="Q6P7A9">
    <property type="interactions" value="1"/>
</dbReference>
<dbReference type="STRING" id="10116.ENSRNOP00000064500"/>
<dbReference type="BindingDB" id="Q6P7A9"/>
<dbReference type="ChEMBL" id="CHEMBL3513"/>
<dbReference type="DrugCentral" id="Q6P7A9"/>
<dbReference type="CAZy" id="GH31">
    <property type="family name" value="Glycoside Hydrolase Family 31"/>
</dbReference>
<dbReference type="GlyCosmos" id="Q6P7A9">
    <property type="glycosylation" value="7 sites, 2 glycans"/>
</dbReference>
<dbReference type="GlyGen" id="Q6P7A9">
    <property type="glycosylation" value="7 sites, 2 N-linked glycans (1 site)"/>
</dbReference>
<dbReference type="iPTMnet" id="Q6P7A9"/>
<dbReference type="PhosphoSitePlus" id="Q6P7A9"/>
<dbReference type="jPOST" id="Q6P7A9"/>
<dbReference type="PaxDb" id="10116-ENSRNOP00000064500"/>
<dbReference type="GeneID" id="367562"/>
<dbReference type="KEGG" id="rno:367562"/>
<dbReference type="AGR" id="RGD:735227"/>
<dbReference type="CTD" id="2548"/>
<dbReference type="RGD" id="735227">
    <property type="gene designation" value="Gaa"/>
</dbReference>
<dbReference type="eggNOG" id="KOG1065">
    <property type="taxonomic scope" value="Eukaryota"/>
</dbReference>
<dbReference type="InParanoid" id="Q6P7A9"/>
<dbReference type="OrthoDB" id="9655at9989"/>
<dbReference type="PhylomeDB" id="Q6P7A9"/>
<dbReference type="Reactome" id="R-RNO-6798695">
    <property type="pathway name" value="Neutrophil degranulation"/>
</dbReference>
<dbReference type="Reactome" id="R-RNO-70221">
    <property type="pathway name" value="Glycogen breakdown (glycogenolysis)"/>
</dbReference>
<dbReference type="SABIO-RK" id="Q6P7A9"/>
<dbReference type="PRO" id="PR:Q6P7A9"/>
<dbReference type="Proteomes" id="UP000002494">
    <property type="component" value="Unplaced"/>
</dbReference>
<dbReference type="GO" id="GO:0120282">
    <property type="term" value="C:autolysosome lumen"/>
    <property type="evidence" value="ECO:0000266"/>
    <property type="project" value="RGD"/>
</dbReference>
<dbReference type="GO" id="GO:0005765">
    <property type="term" value="C:lysosomal membrane"/>
    <property type="evidence" value="ECO:0007669"/>
    <property type="project" value="UniProtKB-SubCell"/>
</dbReference>
<dbReference type="GO" id="GO:0005764">
    <property type="term" value="C:lysosome"/>
    <property type="evidence" value="ECO:0000266"/>
    <property type="project" value="RGD"/>
</dbReference>
<dbReference type="GO" id="GO:0016020">
    <property type="term" value="C:membrane"/>
    <property type="evidence" value="ECO:0000266"/>
    <property type="project" value="RGD"/>
</dbReference>
<dbReference type="GO" id="GO:0004558">
    <property type="term" value="F:alpha-1,4-glucosidase activity"/>
    <property type="evidence" value="ECO:0000314"/>
    <property type="project" value="RGD"/>
</dbReference>
<dbReference type="GO" id="GO:0090599">
    <property type="term" value="F:alpha-glucosidase activity"/>
    <property type="evidence" value="ECO:0000266"/>
    <property type="project" value="RGD"/>
</dbReference>
<dbReference type="GO" id="GO:0030246">
    <property type="term" value="F:carbohydrate binding"/>
    <property type="evidence" value="ECO:0000314"/>
    <property type="project" value="RGD"/>
</dbReference>
<dbReference type="GO" id="GO:0035904">
    <property type="term" value="P:aorta development"/>
    <property type="evidence" value="ECO:0000266"/>
    <property type="project" value="RGD"/>
</dbReference>
<dbReference type="GO" id="GO:0060048">
    <property type="term" value="P:cardiac muscle contraction"/>
    <property type="evidence" value="ECO:0000266"/>
    <property type="project" value="RGD"/>
</dbReference>
<dbReference type="GO" id="GO:0002086">
    <property type="term" value="P:diaphragm contraction"/>
    <property type="evidence" value="ECO:0000266"/>
    <property type="project" value="RGD"/>
</dbReference>
<dbReference type="GO" id="GO:0005980">
    <property type="term" value="P:glycogen catabolic process"/>
    <property type="evidence" value="ECO:0000314"/>
    <property type="project" value="RGD"/>
</dbReference>
<dbReference type="GO" id="GO:0005977">
    <property type="term" value="P:glycogen metabolic process"/>
    <property type="evidence" value="ECO:0000266"/>
    <property type="project" value="RGD"/>
</dbReference>
<dbReference type="GO" id="GO:0061723">
    <property type="term" value="P:glycophagy"/>
    <property type="evidence" value="ECO:0000266"/>
    <property type="project" value="RGD"/>
</dbReference>
<dbReference type="GO" id="GO:0003007">
    <property type="term" value="P:heart morphogenesis"/>
    <property type="evidence" value="ECO:0000266"/>
    <property type="project" value="RGD"/>
</dbReference>
<dbReference type="GO" id="GO:0007626">
    <property type="term" value="P:locomotory behavior"/>
    <property type="evidence" value="ECO:0000266"/>
    <property type="project" value="RGD"/>
</dbReference>
<dbReference type="GO" id="GO:0007040">
    <property type="term" value="P:lysosome organization"/>
    <property type="evidence" value="ECO:0000266"/>
    <property type="project" value="RGD"/>
</dbReference>
<dbReference type="GO" id="GO:0046716">
    <property type="term" value="P:muscle cell cellular homeostasis"/>
    <property type="evidence" value="ECO:0000266"/>
    <property type="project" value="RGD"/>
</dbReference>
<dbReference type="GO" id="GO:0050885">
    <property type="term" value="P:neuromuscular process controlling balance"/>
    <property type="evidence" value="ECO:0000266"/>
    <property type="project" value="RGD"/>
</dbReference>
<dbReference type="GO" id="GO:0050884">
    <property type="term" value="P:neuromuscular process controlling posture"/>
    <property type="evidence" value="ECO:0000266"/>
    <property type="project" value="RGD"/>
</dbReference>
<dbReference type="GO" id="GO:0002026">
    <property type="term" value="P:regulation of the force of heart contraction"/>
    <property type="evidence" value="ECO:0000266"/>
    <property type="project" value="RGD"/>
</dbReference>
<dbReference type="GO" id="GO:0006941">
    <property type="term" value="P:striated muscle contraction"/>
    <property type="evidence" value="ECO:0000266"/>
    <property type="project" value="RGD"/>
</dbReference>
<dbReference type="GO" id="GO:0009888">
    <property type="term" value="P:tissue development"/>
    <property type="evidence" value="ECO:0000266"/>
    <property type="project" value="RGD"/>
</dbReference>
<dbReference type="GO" id="GO:0043181">
    <property type="term" value="P:vacuolar sequestering"/>
    <property type="evidence" value="ECO:0000266"/>
    <property type="project" value="RGD"/>
</dbReference>
<dbReference type="CDD" id="cd06602">
    <property type="entry name" value="GH31_MGAM_SI_GAA"/>
    <property type="match status" value="1"/>
</dbReference>
<dbReference type="CDD" id="cd14752">
    <property type="entry name" value="GH31_N"/>
    <property type="match status" value="1"/>
</dbReference>
<dbReference type="CDD" id="cd00111">
    <property type="entry name" value="Trefoil"/>
    <property type="match status" value="1"/>
</dbReference>
<dbReference type="FunFam" id="4.10.110.10:FF:000007">
    <property type="entry name" value="Lysosomal alpha-glucosidase"/>
    <property type="match status" value="1"/>
</dbReference>
<dbReference type="FunFam" id="3.20.20.80:FF:000072">
    <property type="entry name" value="lysosomal alpha-glucosidase isoform X2"/>
    <property type="match status" value="1"/>
</dbReference>
<dbReference type="FunFam" id="2.60.40.1180:FF:000001">
    <property type="entry name" value="Maltase-glucoamylase, intestinal"/>
    <property type="match status" value="1"/>
</dbReference>
<dbReference type="FunFam" id="2.60.40.1180:FF:000005">
    <property type="entry name" value="Maltase-glucoamylase, intestinal"/>
    <property type="match status" value="1"/>
</dbReference>
<dbReference type="FunFam" id="2.60.40.1760:FF:000001">
    <property type="entry name" value="Maltase-glucoamylase, intestinal"/>
    <property type="match status" value="1"/>
</dbReference>
<dbReference type="Gene3D" id="3.20.20.80">
    <property type="entry name" value="Glycosidases"/>
    <property type="match status" value="1"/>
</dbReference>
<dbReference type="Gene3D" id="2.60.40.1760">
    <property type="entry name" value="glycosyl hydrolase (family 31)"/>
    <property type="match status" value="1"/>
</dbReference>
<dbReference type="Gene3D" id="2.60.40.1180">
    <property type="entry name" value="Golgi alpha-mannosidase II"/>
    <property type="match status" value="2"/>
</dbReference>
<dbReference type="Gene3D" id="4.10.110.10">
    <property type="entry name" value="Spasmolytic Protein, domain 1"/>
    <property type="match status" value="1"/>
</dbReference>
<dbReference type="InterPro" id="IPR011013">
    <property type="entry name" value="Gal_mutarotase_sf_dom"/>
</dbReference>
<dbReference type="InterPro" id="IPR030458">
    <property type="entry name" value="Glyco_hydro_31_AS"/>
</dbReference>
<dbReference type="InterPro" id="IPR048395">
    <property type="entry name" value="Glyco_hydro_31_C"/>
</dbReference>
<dbReference type="InterPro" id="IPR030459">
    <property type="entry name" value="Glyco_hydro_31_CS"/>
</dbReference>
<dbReference type="InterPro" id="IPR025887">
    <property type="entry name" value="Glyco_hydro_31_N_dom"/>
</dbReference>
<dbReference type="InterPro" id="IPR000322">
    <property type="entry name" value="Glyco_hydro_31_TIM"/>
</dbReference>
<dbReference type="InterPro" id="IPR013780">
    <property type="entry name" value="Glyco_hydro_b"/>
</dbReference>
<dbReference type="InterPro" id="IPR017853">
    <property type="entry name" value="Glycoside_hydrolase_SF"/>
</dbReference>
<dbReference type="InterPro" id="IPR017957">
    <property type="entry name" value="P_trefoil_CS"/>
</dbReference>
<dbReference type="InterPro" id="IPR000519">
    <property type="entry name" value="P_trefoil_dom"/>
</dbReference>
<dbReference type="InterPro" id="IPR044913">
    <property type="entry name" value="P_trefoil_dom_sf"/>
</dbReference>
<dbReference type="PANTHER" id="PTHR22762">
    <property type="entry name" value="ALPHA-GLUCOSIDASE"/>
    <property type="match status" value="1"/>
</dbReference>
<dbReference type="PANTHER" id="PTHR22762:SF92">
    <property type="entry name" value="LYSOSOMAL ALPHA-GLUCOSIDASE"/>
    <property type="match status" value="1"/>
</dbReference>
<dbReference type="Pfam" id="PF13802">
    <property type="entry name" value="Gal_mutarotas_2"/>
    <property type="match status" value="1"/>
</dbReference>
<dbReference type="Pfam" id="PF01055">
    <property type="entry name" value="Glyco_hydro_31_2nd"/>
    <property type="match status" value="1"/>
</dbReference>
<dbReference type="Pfam" id="PF21365">
    <property type="entry name" value="Glyco_hydro_31_3rd"/>
    <property type="match status" value="1"/>
</dbReference>
<dbReference type="Pfam" id="PF00088">
    <property type="entry name" value="Trefoil"/>
    <property type="match status" value="1"/>
</dbReference>
<dbReference type="SMART" id="SM00018">
    <property type="entry name" value="PD"/>
    <property type="match status" value="1"/>
</dbReference>
<dbReference type="SUPFAM" id="SSF51445">
    <property type="entry name" value="(Trans)glycosidases"/>
    <property type="match status" value="1"/>
</dbReference>
<dbReference type="SUPFAM" id="SSF74650">
    <property type="entry name" value="Galactose mutarotase-like"/>
    <property type="match status" value="1"/>
</dbReference>
<dbReference type="SUPFAM" id="SSF51011">
    <property type="entry name" value="Glycosyl hydrolase domain"/>
    <property type="match status" value="1"/>
</dbReference>
<dbReference type="PROSITE" id="PS00129">
    <property type="entry name" value="GLYCOSYL_HYDROL_F31_1"/>
    <property type="match status" value="1"/>
</dbReference>
<dbReference type="PROSITE" id="PS00707">
    <property type="entry name" value="GLYCOSYL_HYDROL_F31_2"/>
    <property type="match status" value="1"/>
</dbReference>
<dbReference type="PROSITE" id="PS00025">
    <property type="entry name" value="P_TREFOIL_1"/>
    <property type="match status" value="1"/>
</dbReference>
<dbReference type="PROSITE" id="PS51448">
    <property type="entry name" value="P_TREFOIL_2"/>
    <property type="match status" value="1"/>
</dbReference>
<organism>
    <name type="scientific">Rattus norvegicus</name>
    <name type="common">Rat</name>
    <dbReference type="NCBI Taxonomy" id="10116"/>
    <lineage>
        <taxon>Eukaryota</taxon>
        <taxon>Metazoa</taxon>
        <taxon>Chordata</taxon>
        <taxon>Craniata</taxon>
        <taxon>Vertebrata</taxon>
        <taxon>Euteleostomi</taxon>
        <taxon>Mammalia</taxon>
        <taxon>Eutheria</taxon>
        <taxon>Euarchontoglires</taxon>
        <taxon>Glires</taxon>
        <taxon>Rodentia</taxon>
        <taxon>Myomorpha</taxon>
        <taxon>Muroidea</taxon>
        <taxon>Muridae</taxon>
        <taxon>Murinae</taxon>
        <taxon>Rattus</taxon>
    </lineage>
</organism>
<comment type="function">
    <text evidence="2">Essential for the degradation of glycogen in lysosomes. Has highest activity on alpha-1,4-linked glycosidic linkages, but can also hydrolyze alpha-1,6-linked glucans.</text>
</comment>
<comment type="catalytic activity">
    <reaction evidence="2">
        <text>Hydrolysis of terminal, non-reducing (1-&gt;4)-linked alpha-D-glucose residues with release of alpha-D-glucose.</text>
        <dbReference type="EC" id="3.2.1.20"/>
    </reaction>
</comment>
<comment type="subcellular location">
    <subcellularLocation>
        <location evidence="2">Lysosome</location>
    </subcellularLocation>
    <subcellularLocation>
        <location evidence="2">Lysosome membrane</location>
    </subcellularLocation>
</comment>
<comment type="similarity">
    <text evidence="6">Belongs to the glycosyl hydrolase 31 family.</text>
</comment>
<reference key="1">
    <citation type="journal article" date="2004" name="Genome Res.">
        <title>The status, quality, and expansion of the NIH full-length cDNA project: the Mammalian Gene Collection (MGC).</title>
        <authorList>
            <consortium name="The MGC Project Team"/>
        </authorList>
    </citation>
    <scope>NUCLEOTIDE SEQUENCE [LARGE SCALE MRNA]</scope>
    <source>
        <tissue>Prostate</tissue>
    </source>
</reference>
<sequence length="953" mass="106207">MNIRKPLCSNSVVGACTLVSLTTAVILGHLMLRELMLLPQDLHESSSGLWKTYRPHHQESYEPAPLHIQEHAEQLRAVPTQCDVTPNSRFDCAPDKGITQEQCEARGCCWVPAGQVLNGPVMGQPWCFFPPSYPSYRLENLSSTESGYTATLTRTSPTFFPKDVLTLQLEVLMETDSRLHFMIKDPTSKRYEVPLETPRVLSQAPSPLYSVEFSEEPFGVIVRRKLGGRVLLNTTVAPLFFADQFLQLSTSLPSQHIAGLGEHLSPLMLSTEWTRITLWNRDVAPSQGVNLYGSHPFYLALEDGGLAHGVFLLNSNAMDVVLQPSPALTWRSTGGILDVYVFLGPEPKSVVQQYLDVVGYPFMPPYWGLGFHLCRWGYSSTAIVRQVVENMTRTHFPLDVQWNDLDYMDARRDFTFNQDGFADFPDMVHELHQGGRRYMMIVDPAISSSGPAGSYRPYDEGLRRGVFITNETGQPLIGKVWPGSTAFPDFTNPETLDWWQDMVSEFHAQVPFDGMWIDMNEPSNFIRGSQQGCPDNELENPPYVPGVVGGALQAATICASSHQFLSTHYNLHNLYGLTEAIASSRALVKTRGTRPFVISRSTFAGHGRYAGHWTGDVWSSWEHLAYSVPEILQFNLLGVPLVGADICGFQGNTTEELCVRWTQLGAFYPFMRNHNDLNSLPQEPYRFSETAQQAMRKAFTLRYALLPYLYTLFHGAHVKGDTVARPLFLEFPEDPSTWSVDRQLLWGPALLITPVLEPGKTDVTGYFPKGMWYNLQMVPVETLGSLPSSSPASSFRSIVHSKGQWLTLEAPLDTINVHLRAGYIIPLQGPSLTTTESRKQPMALAVALTESGEASGELFWDDGESLGVLERGAYTLVTFSAKNNTIVNKLVHVTKEGGELQLREVTILGVTTAPTQVLSNGISVSNFTYSPDDKSLSIPVSLLMGERFQIDWS</sequence>